<name>PROD_BOVIN</name>
<dbReference type="EC" id="1.5.5.2"/>
<dbReference type="EMBL" id="BC118353">
    <property type="protein sequence ID" value="AAI18354.1"/>
    <property type="molecule type" value="mRNA"/>
</dbReference>
<dbReference type="RefSeq" id="NP_001068653.1">
    <property type="nucleotide sequence ID" value="NM_001075185.1"/>
</dbReference>
<dbReference type="FunCoup" id="Q148G5">
    <property type="interactions" value="322"/>
</dbReference>
<dbReference type="STRING" id="9913.ENSBTAP00000056646"/>
<dbReference type="PaxDb" id="9913-ENSBTAP00000056646"/>
<dbReference type="GeneID" id="505094"/>
<dbReference type="KEGG" id="bta:505094"/>
<dbReference type="CTD" id="5625"/>
<dbReference type="eggNOG" id="KOG0186">
    <property type="taxonomic scope" value="Eukaryota"/>
</dbReference>
<dbReference type="InParanoid" id="Q148G5"/>
<dbReference type="OrthoDB" id="5464at2759"/>
<dbReference type="UniPathway" id="UPA00261">
    <property type="reaction ID" value="UER00373"/>
</dbReference>
<dbReference type="Proteomes" id="UP000009136">
    <property type="component" value="Unplaced"/>
</dbReference>
<dbReference type="GO" id="GO:0005759">
    <property type="term" value="C:mitochondrial matrix"/>
    <property type="evidence" value="ECO:0007669"/>
    <property type="project" value="UniProtKB-SubCell"/>
</dbReference>
<dbReference type="GO" id="GO:0005739">
    <property type="term" value="C:mitochondrion"/>
    <property type="evidence" value="ECO:0000318"/>
    <property type="project" value="GO_Central"/>
</dbReference>
<dbReference type="GO" id="GO:0071949">
    <property type="term" value="F:FAD binding"/>
    <property type="evidence" value="ECO:0000250"/>
    <property type="project" value="UniProtKB"/>
</dbReference>
<dbReference type="GO" id="GO:0004657">
    <property type="term" value="F:proline dehydrogenase activity"/>
    <property type="evidence" value="ECO:0000250"/>
    <property type="project" value="UniProtKB"/>
</dbReference>
<dbReference type="GO" id="GO:0010133">
    <property type="term" value="P:proline catabolic process to glutamate"/>
    <property type="evidence" value="ECO:0000318"/>
    <property type="project" value="GO_Central"/>
</dbReference>
<dbReference type="FunFam" id="3.20.20.220:FF:000006">
    <property type="entry name" value="Proline dehydrogenase"/>
    <property type="match status" value="1"/>
</dbReference>
<dbReference type="Gene3D" id="3.20.20.220">
    <property type="match status" value="2"/>
</dbReference>
<dbReference type="InterPro" id="IPR029041">
    <property type="entry name" value="FAD-linked_oxidoreductase-like"/>
</dbReference>
<dbReference type="InterPro" id="IPR002872">
    <property type="entry name" value="Proline_DH_dom"/>
</dbReference>
<dbReference type="InterPro" id="IPR015659">
    <property type="entry name" value="Proline_oxidase"/>
</dbReference>
<dbReference type="PANTHER" id="PTHR13914:SF0">
    <property type="entry name" value="PROLINE DEHYDROGENASE 1, MITOCHONDRIAL"/>
    <property type="match status" value="1"/>
</dbReference>
<dbReference type="PANTHER" id="PTHR13914">
    <property type="entry name" value="PROLINE OXIDASE"/>
    <property type="match status" value="1"/>
</dbReference>
<dbReference type="Pfam" id="PF01619">
    <property type="entry name" value="Pro_dh"/>
    <property type="match status" value="1"/>
</dbReference>
<dbReference type="SUPFAM" id="SSF51730">
    <property type="entry name" value="FAD-linked oxidoreductase"/>
    <property type="match status" value="1"/>
</dbReference>
<organism>
    <name type="scientific">Bos taurus</name>
    <name type="common">Bovine</name>
    <dbReference type="NCBI Taxonomy" id="9913"/>
    <lineage>
        <taxon>Eukaryota</taxon>
        <taxon>Metazoa</taxon>
        <taxon>Chordata</taxon>
        <taxon>Craniata</taxon>
        <taxon>Vertebrata</taxon>
        <taxon>Euteleostomi</taxon>
        <taxon>Mammalia</taxon>
        <taxon>Eutheria</taxon>
        <taxon>Laurasiatheria</taxon>
        <taxon>Artiodactyla</taxon>
        <taxon>Ruminantia</taxon>
        <taxon>Pecora</taxon>
        <taxon>Bovidae</taxon>
        <taxon>Bovinae</taxon>
        <taxon>Bos</taxon>
    </lineage>
</organism>
<gene>
    <name evidence="6" type="primary">PRODH</name>
</gene>
<accession>Q148G5</accession>
<proteinExistence type="evidence at transcript level"/>
<keyword id="KW-0007">Acetylation</keyword>
<keyword id="KW-0274">FAD</keyword>
<keyword id="KW-0285">Flavoprotein</keyword>
<keyword id="KW-0496">Mitochondrion</keyword>
<keyword id="KW-0560">Oxidoreductase</keyword>
<keyword id="KW-0642">Proline metabolism</keyword>
<keyword id="KW-1185">Reference proteome</keyword>
<keyword id="KW-0809">Transit peptide</keyword>
<reference evidence="6" key="1">
    <citation type="submission" date="2006-06" db="EMBL/GenBank/DDBJ databases">
        <authorList>
            <consortium name="NIH - Mammalian Gene Collection (MGC) project"/>
        </authorList>
    </citation>
    <scope>NUCLEOTIDE SEQUENCE [LARGE SCALE MRNA]</scope>
    <source>
        <strain evidence="6">Hereford</strain>
        <tissue evidence="6">Fetal cerebellum</tissue>
    </source>
</reference>
<sequence>MGLRRTSWMHFSALCRRAPLSTAPAAREQPAAGPGAEPVCGPAETARPPVPAVDFGNTQEAYRSRRSWELARSLLVLSLCASPALLARHEQLLHLARKLLGQRLFNTLMKMTFYGQFVAGEDQESIRPLIQHNRAFGVGSILDYGVEEDLTPEEAERTEMESCSSALERDGCGVSKREKQFQAHRAFGDRRDGVTSARTYFYASEAKCDSHMETFLHCIEASGGASEDGFSAIKLTALGRPQFLLQFSDMLTKWRRFFHHVAAEQGKAGLAAVDTKLEVAALQESVVKMGIASRAEIEDWFTAETLGVSGTLDLLDWCSLIDSRTELSRHLVVPNMQTGRLEPLLSQFTEEEERQMTRMLQRMDVLAKKANQVGVRLMVDAEQTYFQPAISRLTLEMQRRFNVERPLIFNTFQCYLRDAYDNVILDVELARREGWCFGAKLVRGAYMAQVGYEDPINPTYEATSAVYHRCLDYVLEELKHNARAAVMVASHNEDTVRFTLRRMEELGLHPADRQVYFGQLLGMCDHISFPLGQAGFPVYKYVPYGPVMEVLPYLSRRALENSGVMKGAQRERQLLWQELKRRLCTRSLFHQPA</sequence>
<evidence type="ECO:0000250" key="1">
    <source>
        <dbReference type="UniProtKB" id="O43272"/>
    </source>
</evidence>
<evidence type="ECO:0000250" key="2">
    <source>
        <dbReference type="UniProtKB" id="Q9WU79"/>
    </source>
</evidence>
<evidence type="ECO:0000255" key="3"/>
<evidence type="ECO:0000256" key="4">
    <source>
        <dbReference type="SAM" id="MobiDB-lite"/>
    </source>
</evidence>
<evidence type="ECO:0000305" key="5"/>
<evidence type="ECO:0000312" key="6">
    <source>
        <dbReference type="EMBL" id="AAI18354.1"/>
    </source>
</evidence>
<comment type="function">
    <text evidence="1">Converts proline to delta-1-pyrroline-5-carboxylate.</text>
</comment>
<comment type="catalytic activity">
    <reaction>
        <text>L-proline + a quinone = (S)-1-pyrroline-5-carboxylate + a quinol + H(+)</text>
        <dbReference type="Rhea" id="RHEA:23784"/>
        <dbReference type="ChEBI" id="CHEBI:15378"/>
        <dbReference type="ChEBI" id="CHEBI:17388"/>
        <dbReference type="ChEBI" id="CHEBI:24646"/>
        <dbReference type="ChEBI" id="CHEBI:60039"/>
        <dbReference type="ChEBI" id="CHEBI:132124"/>
        <dbReference type="EC" id="1.5.5.2"/>
    </reaction>
</comment>
<comment type="cofactor">
    <cofactor evidence="1">
        <name>FAD</name>
        <dbReference type="ChEBI" id="CHEBI:57692"/>
    </cofactor>
</comment>
<comment type="pathway">
    <text evidence="1">Amino-acid degradation; L-proline degradation into L-glutamate; L-glutamate from L-proline: step 1/2.</text>
</comment>
<comment type="subcellular location">
    <subcellularLocation>
        <location evidence="1">Mitochondrion matrix</location>
    </subcellularLocation>
</comment>
<comment type="similarity">
    <text evidence="3">Belongs to the proline oxidase family.</text>
</comment>
<protein>
    <recommendedName>
        <fullName evidence="1">Proline dehydrogenase 1, mitochondrial</fullName>
        <ecNumber>1.5.5.2</ecNumber>
    </recommendedName>
    <alternativeName>
        <fullName evidence="1">Proline oxidase</fullName>
    </alternativeName>
</protein>
<feature type="transit peptide" description="Mitochondrion" evidence="5">
    <location>
        <begin position="1"/>
        <end status="unknown"/>
    </location>
</feature>
<feature type="chain" id="PRO_0000406783" description="Proline dehydrogenase 1, mitochondrial" evidence="5">
    <location>
        <begin status="unknown"/>
        <end position="593"/>
    </location>
</feature>
<feature type="region of interest" description="Disordered" evidence="4">
    <location>
        <begin position="24"/>
        <end position="44"/>
    </location>
</feature>
<feature type="modified residue" description="N6-acetyllysine" evidence="2">
    <location>
        <position position="368"/>
    </location>
</feature>
<feature type="modified residue" description="N6-acetyllysine" evidence="2">
    <location>
        <position position="479"/>
    </location>
</feature>